<protein>
    <recommendedName>
        <fullName>Protoheme IX farnesyltransferase, mitochondrial</fullName>
        <ecNumber>2.5.1.-</ecNumber>
    </recommendedName>
    <alternativeName>
        <fullName>Heme O synthase</fullName>
    </alternativeName>
</protein>
<dbReference type="EC" id="2.5.1.-"/>
<dbReference type="EMBL" id="CR382123">
    <property type="protein sequence ID" value="CAH01474.1"/>
    <property type="molecule type" value="Genomic_DNA"/>
</dbReference>
<dbReference type="RefSeq" id="XP_452623.1">
    <property type="nucleotide sequence ID" value="XM_452623.1"/>
</dbReference>
<dbReference type="SMR" id="Q6CTW6"/>
<dbReference type="FunCoup" id="Q6CTW6">
    <property type="interactions" value="852"/>
</dbReference>
<dbReference type="STRING" id="284590.Q6CTW6"/>
<dbReference type="PaxDb" id="284590-Q6CTW6"/>
<dbReference type="KEGG" id="kla:KLLA0_C09548g"/>
<dbReference type="eggNOG" id="KOG1380">
    <property type="taxonomic scope" value="Eukaryota"/>
</dbReference>
<dbReference type="HOGENOM" id="CLU_029631_2_1_1"/>
<dbReference type="InParanoid" id="Q6CTW6"/>
<dbReference type="OMA" id="MGREPDF"/>
<dbReference type="Proteomes" id="UP000000598">
    <property type="component" value="Chromosome C"/>
</dbReference>
<dbReference type="GO" id="GO:0031966">
    <property type="term" value="C:mitochondrial membrane"/>
    <property type="evidence" value="ECO:0007669"/>
    <property type="project" value="UniProtKB-SubCell"/>
</dbReference>
<dbReference type="GO" id="GO:0008495">
    <property type="term" value="F:protoheme IX farnesyltransferase activity"/>
    <property type="evidence" value="ECO:0007669"/>
    <property type="project" value="InterPro"/>
</dbReference>
<dbReference type="GO" id="GO:0006784">
    <property type="term" value="P:heme A biosynthetic process"/>
    <property type="evidence" value="ECO:0007669"/>
    <property type="project" value="TreeGrafter"/>
</dbReference>
<dbReference type="CDD" id="cd13957">
    <property type="entry name" value="PT_UbiA_Cox10"/>
    <property type="match status" value="1"/>
</dbReference>
<dbReference type="FunFam" id="1.10.357.140:FF:000004">
    <property type="entry name" value="Protoheme IX farnesyltransferase, mitochondrial"/>
    <property type="match status" value="1"/>
</dbReference>
<dbReference type="Gene3D" id="1.10.357.140">
    <property type="entry name" value="UbiA prenyltransferase"/>
    <property type="match status" value="1"/>
</dbReference>
<dbReference type="InterPro" id="IPR006369">
    <property type="entry name" value="Protohaem_IX_farnesylTrfase"/>
</dbReference>
<dbReference type="InterPro" id="IPR016315">
    <property type="entry name" value="Protohaem_IX_farnesylTrfase_mt"/>
</dbReference>
<dbReference type="InterPro" id="IPR000537">
    <property type="entry name" value="UbiA_prenyltransferase"/>
</dbReference>
<dbReference type="InterPro" id="IPR030470">
    <property type="entry name" value="UbiA_prenylTrfase_CS"/>
</dbReference>
<dbReference type="InterPro" id="IPR044878">
    <property type="entry name" value="UbiA_sf"/>
</dbReference>
<dbReference type="NCBIfam" id="TIGR01473">
    <property type="entry name" value="cyoE_ctaB"/>
    <property type="match status" value="1"/>
</dbReference>
<dbReference type="PANTHER" id="PTHR43448">
    <property type="entry name" value="PROTOHEME IX FARNESYLTRANSFERASE, MITOCHONDRIAL"/>
    <property type="match status" value="1"/>
</dbReference>
<dbReference type="PANTHER" id="PTHR43448:SF2">
    <property type="entry name" value="PROTOHEME IX FARNESYLTRANSFERASE, MITOCHONDRIAL"/>
    <property type="match status" value="1"/>
</dbReference>
<dbReference type="Pfam" id="PF01040">
    <property type="entry name" value="UbiA"/>
    <property type="match status" value="1"/>
</dbReference>
<dbReference type="PIRSF" id="PIRSF001773">
    <property type="entry name" value="COX10"/>
    <property type="match status" value="1"/>
</dbReference>
<dbReference type="PROSITE" id="PS00943">
    <property type="entry name" value="UBIA"/>
    <property type="match status" value="1"/>
</dbReference>
<evidence type="ECO:0000250" key="1"/>
<evidence type="ECO:0000255" key="2"/>
<evidence type="ECO:0000305" key="3"/>
<keyword id="KW-0350">Heme biosynthesis</keyword>
<keyword id="KW-0472">Membrane</keyword>
<keyword id="KW-0496">Mitochondrion</keyword>
<keyword id="KW-1185">Reference proteome</keyword>
<keyword id="KW-0808">Transferase</keyword>
<keyword id="KW-0809">Transit peptide</keyword>
<keyword id="KW-0812">Transmembrane</keyword>
<keyword id="KW-1133">Transmembrane helix</keyword>
<name>COX10_KLULA</name>
<accession>Q6CTW6</accession>
<feature type="transit peptide" description="Mitochondrion" evidence="2">
    <location>
        <begin position="1"/>
        <end position="27"/>
    </location>
</feature>
<feature type="chain" id="PRO_0000045417" description="Protoheme IX farnesyltransferase, mitochondrial">
    <location>
        <begin position="28"/>
        <end position="452"/>
    </location>
</feature>
<feature type="transmembrane region" description="Helical" evidence="2">
    <location>
        <begin position="152"/>
        <end position="172"/>
    </location>
</feature>
<feature type="transmembrane region" description="Helical" evidence="2">
    <location>
        <begin position="235"/>
        <end position="255"/>
    </location>
</feature>
<feature type="transmembrane region" description="Helical" evidence="2">
    <location>
        <begin position="267"/>
        <end position="287"/>
    </location>
</feature>
<feature type="transmembrane region" description="Helical" evidence="2">
    <location>
        <begin position="291"/>
        <end position="311"/>
    </location>
</feature>
<feature type="transmembrane region" description="Helical" evidence="2">
    <location>
        <begin position="341"/>
        <end position="361"/>
    </location>
</feature>
<feature type="transmembrane region" description="Helical" evidence="2">
    <location>
        <begin position="364"/>
        <end position="386"/>
    </location>
</feature>
<feature type="transmembrane region" description="Helical" evidence="2">
    <location>
        <begin position="417"/>
        <end position="437"/>
    </location>
</feature>
<reference key="1">
    <citation type="journal article" date="2004" name="Nature">
        <title>Genome evolution in yeasts.</title>
        <authorList>
            <person name="Dujon B."/>
            <person name="Sherman D."/>
            <person name="Fischer G."/>
            <person name="Durrens P."/>
            <person name="Casaregola S."/>
            <person name="Lafontaine I."/>
            <person name="de Montigny J."/>
            <person name="Marck C."/>
            <person name="Neuveglise C."/>
            <person name="Talla E."/>
            <person name="Goffard N."/>
            <person name="Frangeul L."/>
            <person name="Aigle M."/>
            <person name="Anthouard V."/>
            <person name="Babour A."/>
            <person name="Barbe V."/>
            <person name="Barnay S."/>
            <person name="Blanchin S."/>
            <person name="Beckerich J.-M."/>
            <person name="Beyne E."/>
            <person name="Bleykasten C."/>
            <person name="Boisrame A."/>
            <person name="Boyer J."/>
            <person name="Cattolico L."/>
            <person name="Confanioleri F."/>
            <person name="de Daruvar A."/>
            <person name="Despons L."/>
            <person name="Fabre E."/>
            <person name="Fairhead C."/>
            <person name="Ferry-Dumazet H."/>
            <person name="Groppi A."/>
            <person name="Hantraye F."/>
            <person name="Hennequin C."/>
            <person name="Jauniaux N."/>
            <person name="Joyet P."/>
            <person name="Kachouri R."/>
            <person name="Kerrest A."/>
            <person name="Koszul R."/>
            <person name="Lemaire M."/>
            <person name="Lesur I."/>
            <person name="Ma L."/>
            <person name="Muller H."/>
            <person name="Nicaud J.-M."/>
            <person name="Nikolski M."/>
            <person name="Oztas S."/>
            <person name="Ozier-Kalogeropoulos O."/>
            <person name="Pellenz S."/>
            <person name="Potier S."/>
            <person name="Richard G.-F."/>
            <person name="Straub M.-L."/>
            <person name="Suleau A."/>
            <person name="Swennen D."/>
            <person name="Tekaia F."/>
            <person name="Wesolowski-Louvel M."/>
            <person name="Westhof E."/>
            <person name="Wirth B."/>
            <person name="Zeniou-Meyer M."/>
            <person name="Zivanovic Y."/>
            <person name="Bolotin-Fukuhara M."/>
            <person name="Thierry A."/>
            <person name="Bouchier C."/>
            <person name="Caudron B."/>
            <person name="Scarpelli C."/>
            <person name="Gaillardin C."/>
            <person name="Weissenbach J."/>
            <person name="Wincker P."/>
            <person name="Souciet J.-L."/>
        </authorList>
    </citation>
    <scope>NUCLEOTIDE SEQUENCE [LARGE SCALE GENOMIC DNA]</scope>
    <source>
        <strain>ATCC 8585 / CBS 2359 / DSM 70799 / NBRC 1267 / NRRL Y-1140 / WM37</strain>
    </source>
</reference>
<comment type="function">
    <text evidence="1">Converts protoheme IX and farnesyl diphosphate to heme O.</text>
</comment>
<comment type="subcellular location">
    <subcellularLocation>
        <location evidence="1">Mitochondrion membrane</location>
        <topology evidence="1">Multi-pass membrane protein</topology>
    </subcellularLocation>
</comment>
<comment type="similarity">
    <text evidence="3">Belongs to the UbiA prenyltransferase family.</text>
</comment>
<gene>
    <name type="primary">COX10</name>
    <name type="ordered locus">KLLA0C09548g</name>
</gene>
<proteinExistence type="inferred from homology"/>
<sequence length="452" mass="51024">MSLVIQPLLMRALNPNLSSILISGRGFSLIQHRRFAFRAGSGNNNSEQNQVHINTAPIEFTANLLAGKNETEAETEGLKGTALKALRCNDTTSDSEPQHNMENLPFKVKLVDKGQRKQIKESKARVEPRPEVSLKKTYIEPYLQLSKPRLTVLVMLSAICSYALSPYPATVLQLLSLTVGTTLCSASANAINMGREPDFDRQMIRTQARPVVRGIVSPNQAFKFATAAGTLGTSILWLGVNPTVAFLGFSNIALYAWLYTSLKRKHIINTWVGALVGAIPPLMGWAASSPLSHPGAWCLAGLLYAWQFPHFNTLSHNIRNEYKNAGYVMTAWKNPKLNARVALRYSLLMFPLCFGLSYFNVTDWYYQLDSAFVNAWMSLWAFKFYFQQKRNYSKEIYNNKTEFNKGLAMANVYARRTFWVSVLHLPAVLILAILHKKDRWDWLFEDKKQLSA</sequence>
<organism>
    <name type="scientific">Kluyveromyces lactis (strain ATCC 8585 / CBS 2359 / DSM 70799 / NBRC 1267 / NRRL Y-1140 / WM37)</name>
    <name type="common">Yeast</name>
    <name type="synonym">Candida sphaerica</name>
    <dbReference type="NCBI Taxonomy" id="284590"/>
    <lineage>
        <taxon>Eukaryota</taxon>
        <taxon>Fungi</taxon>
        <taxon>Dikarya</taxon>
        <taxon>Ascomycota</taxon>
        <taxon>Saccharomycotina</taxon>
        <taxon>Saccharomycetes</taxon>
        <taxon>Saccharomycetales</taxon>
        <taxon>Saccharomycetaceae</taxon>
        <taxon>Kluyveromyces</taxon>
    </lineage>
</organism>